<gene>
    <name type="ordered locus">At3g47110</name>
    <name type="ORF">F13I12.160</name>
</gene>
<feature type="signal peptide" evidence="4">
    <location>
        <begin position="1"/>
        <end position="30"/>
    </location>
</feature>
<feature type="chain" id="PRO_0000401355" description="Putative receptor-like protein kinase At3g47110">
    <location>
        <begin position="31"/>
        <end position="1025"/>
    </location>
</feature>
<feature type="topological domain" description="Extracellular" evidence="4">
    <location>
        <begin position="31"/>
        <end position="653"/>
    </location>
</feature>
<feature type="transmembrane region" description="Helical" evidence="4">
    <location>
        <begin position="654"/>
        <end position="674"/>
    </location>
</feature>
<feature type="topological domain" description="Cytoplasmic" evidence="4">
    <location>
        <begin position="675"/>
        <end position="1025"/>
    </location>
</feature>
<feature type="repeat" description="LRR 1">
    <location>
        <begin position="104"/>
        <end position="128"/>
    </location>
</feature>
<feature type="repeat" description="LRR 2">
    <location>
        <begin position="130"/>
        <end position="151"/>
    </location>
</feature>
<feature type="repeat" description="LRR 3">
    <location>
        <begin position="152"/>
        <end position="175"/>
    </location>
</feature>
<feature type="repeat" description="LRR 4">
    <location>
        <begin position="176"/>
        <end position="200"/>
    </location>
</feature>
<feature type="repeat" description="LRR 5">
    <location>
        <begin position="202"/>
        <end position="224"/>
    </location>
</feature>
<feature type="repeat" description="LRR 6">
    <location>
        <begin position="226"/>
        <end position="248"/>
    </location>
</feature>
<feature type="repeat" description="LRR 7">
    <location>
        <begin position="249"/>
        <end position="271"/>
    </location>
</feature>
<feature type="repeat" description="LRR 8">
    <location>
        <begin position="273"/>
        <end position="297"/>
    </location>
</feature>
<feature type="repeat" description="LRR 9">
    <location>
        <begin position="298"/>
        <end position="323"/>
    </location>
</feature>
<feature type="repeat" description="LRR 10">
    <location>
        <begin position="325"/>
        <end position="344"/>
    </location>
</feature>
<feature type="repeat" description="LRR 11">
    <location>
        <begin position="351"/>
        <end position="374"/>
    </location>
</feature>
<feature type="repeat" description="LRR 12">
    <location>
        <begin position="376"/>
        <end position="400"/>
    </location>
</feature>
<feature type="repeat" description="LRR 13">
    <location>
        <begin position="401"/>
        <end position="424"/>
    </location>
</feature>
<feature type="repeat" description="LRR 14">
    <location>
        <begin position="426"/>
        <end position="448"/>
    </location>
</feature>
<feature type="repeat" description="LRR 15">
    <location>
        <begin position="449"/>
        <end position="472"/>
    </location>
</feature>
<feature type="repeat" description="LRR 16">
    <location>
        <begin position="473"/>
        <end position="496"/>
    </location>
</feature>
<feature type="repeat" description="LRR 17">
    <location>
        <begin position="498"/>
        <end position="520"/>
    </location>
</feature>
<feature type="repeat" description="LRR 18">
    <location>
        <begin position="521"/>
        <end position="544"/>
    </location>
</feature>
<feature type="repeat" description="LRR 19">
    <location>
        <begin position="546"/>
        <end position="567"/>
    </location>
</feature>
<feature type="repeat" description="LRR 20">
    <location>
        <begin position="568"/>
        <end position="593"/>
    </location>
</feature>
<feature type="repeat" description="LRR 21">
    <location>
        <begin position="595"/>
        <end position="616"/>
    </location>
</feature>
<feature type="domain" description="Protein kinase" evidence="5">
    <location>
        <begin position="719"/>
        <end position="1020"/>
    </location>
</feature>
<feature type="active site" description="Proton acceptor" evidence="5 6">
    <location>
        <position position="856"/>
    </location>
</feature>
<feature type="binding site" evidence="5">
    <location>
        <begin position="725"/>
        <end position="733"/>
    </location>
    <ligand>
        <name>ATP</name>
        <dbReference type="ChEBI" id="CHEBI:30616"/>
    </ligand>
</feature>
<feature type="binding site" evidence="5">
    <location>
        <position position="748"/>
    </location>
    <ligand>
        <name>ATP</name>
        <dbReference type="ChEBI" id="CHEBI:30616"/>
    </ligand>
</feature>
<feature type="modified residue" description="Phosphothreonine" evidence="3">
    <location>
        <position position="716"/>
    </location>
</feature>
<feature type="modified residue" description="Phosphotyrosine" evidence="3">
    <location>
        <position position="798"/>
    </location>
</feature>
<feature type="modified residue" description="Phosphotyrosine" evidence="2">
    <location>
        <position position="843"/>
    </location>
</feature>
<feature type="modified residue" description="Phosphotyrosine" evidence="2">
    <location>
        <position position="904"/>
    </location>
</feature>
<feature type="glycosylation site" description="N-linked (GlcNAc...) asparagine" evidence="4">
    <location>
        <position position="63"/>
    </location>
</feature>
<feature type="glycosylation site" description="N-linked (GlcNAc...) asparagine" evidence="4">
    <location>
        <position position="103"/>
    </location>
</feature>
<feature type="glycosylation site" description="N-linked (GlcNAc...) asparagine" evidence="4">
    <location>
        <position position="135"/>
    </location>
</feature>
<feature type="glycosylation site" description="N-linked (GlcNAc...) asparagine" evidence="4">
    <location>
        <position position="151"/>
    </location>
</feature>
<feature type="glycosylation site" description="N-linked (GlcNAc...) asparagine" evidence="4">
    <location>
        <position position="188"/>
    </location>
</feature>
<feature type="glycosylation site" description="N-linked (GlcNAc...) asparagine" evidence="4">
    <location>
        <position position="199"/>
    </location>
</feature>
<feature type="glycosylation site" description="N-linked (GlcNAc...) asparagine" evidence="4">
    <location>
        <position position="247"/>
    </location>
</feature>
<feature type="glycosylation site" description="N-linked (GlcNAc...) asparagine" evidence="4">
    <location>
        <position position="296"/>
    </location>
</feature>
<feature type="glycosylation site" description="N-linked (GlcNAc...) asparagine" evidence="4">
    <location>
        <position position="331"/>
    </location>
</feature>
<feature type="glycosylation site" description="N-linked (GlcNAc...) asparagine" evidence="4">
    <location>
        <position position="336"/>
    </location>
</feature>
<feature type="glycosylation site" description="N-linked (GlcNAc...) asparagine" evidence="4">
    <location>
        <position position="350"/>
    </location>
</feature>
<feature type="glycosylation site" description="N-linked (GlcNAc...) asparagine" evidence="4">
    <location>
        <position position="374"/>
    </location>
</feature>
<feature type="glycosylation site" description="N-linked (GlcNAc...) asparagine" evidence="4">
    <location>
        <position position="447"/>
    </location>
</feature>
<feature type="glycosylation site" description="N-linked (GlcNAc...) asparagine" evidence="4">
    <location>
        <position position="458"/>
    </location>
</feature>
<feature type="glycosylation site" description="N-linked (GlcNAc...) asparagine" evidence="4">
    <location>
        <position position="486"/>
    </location>
</feature>
<feature type="glycosylation site" description="N-linked (GlcNAc...) asparagine" evidence="4">
    <location>
        <position position="503"/>
    </location>
</feature>
<feature type="glycosylation site" description="N-linked (GlcNAc...) asparagine" evidence="4">
    <location>
        <position position="579"/>
    </location>
</feature>
<feature type="glycosylation site" description="N-linked (GlcNAc...) asparagine" evidence="4">
    <location>
        <position position="590"/>
    </location>
</feature>
<feature type="glycosylation site" description="N-linked (GlcNAc...) asparagine" evidence="4">
    <location>
        <position position="598"/>
    </location>
</feature>
<feature type="glycosylation site" description="N-linked (GlcNAc...) asparagine" evidence="4">
    <location>
        <position position="616"/>
    </location>
</feature>
<protein>
    <recommendedName>
        <fullName>Putative receptor-like protein kinase At3g47110</fullName>
        <ecNumber>2.7.11.1</ecNumber>
    </recommendedName>
</protein>
<sequence>MGVPCIVMRLILVSALLVSVSLEHSDMVCAQTIRLTEETDKQALLEFKSQVSETSRVVLGSWNDSLPLCSWTGVKCGLKHRRVTGVDLGGLKLTGVVSPFVGNLSFLRSLNLADNFFHGAIPSEVGNLFRLQYLNMSNNLFGGVIPVVLSNCSSLSTLDLSSNHLEQGVPLEFGSLSKLVLLSLGRNNLTGKFPASLGNLTSLQMLDFIYNQIEGEIPGDIARLKQMIFFRIALNKFNGVFPPPIYNLSSLIFLSITGNSFSGTLRPDFGSLLPNLQILYMGINSFTGTIPETLSNISSLRQLDIPSNHLTGKIPLSFGRLQNLLLLGLNNNSLGNYSSGDLDFLGALTNCSQLQYLNVGFNKLGGQLPVFIANLSTQLTELSLGGNLISGSIPHGIGNLVSLQTLDLGENLLTGKLPPSLGELSELRKVLLYSNGLSGEIPSSLGNISGLTYLYLLNNSFEGSIPSSLGSCSYLLDLNLGTNKLNGSIPHELMELPSLVVLNVSFNLLVGPLRQDIGKLKFLLALDVSYNKLSGQIPQTLANCLSLEFLLLQGNSFVGPIPDIRGLTGLRFLDLSKNNLSGTIPEYMANFSKLQNLNLSLNNFDGAVPTEGVFRNTSAMSVFGNINLCGGIPSLQLQPCSVELPRRHSSVRKIITICVSAVMAALLLLCLCVVYLCWYKLRVKSVRANNNENDRSFSPVKSFYEKISYDELYKTTGGFSSSNLIGSGNFGAVFKGFLGSKNKAVAIKVLNLCKRGAAKSFIAECEALGGIRHRNLVKLVTICSSSDFEGNDFRALVYEFMPNGNLDMWLHPDEIEETGNPSRTLGLFARLNIAIDVASALVYLHTYCHNPIAHCDIKPSNILLDKDLTAHVSDFGLAQLLLKFDRDTFHIQFSSAGVRGTIGYAAPEYGMGGHPSIMGDVYSFGIVLLEIFTGKRPTNKLFVDGLTLHSFTKSALQKRQALDITDETILRGAYAQHFNMVECLTLVFRVGVSCSEESPVNRISMAEAISKLVSIRESFFRDEET</sequence>
<keyword id="KW-0067">ATP-binding</keyword>
<keyword id="KW-1003">Cell membrane</keyword>
<keyword id="KW-0325">Glycoprotein</keyword>
<keyword id="KW-0418">Kinase</keyword>
<keyword id="KW-0433">Leucine-rich repeat</keyword>
<keyword id="KW-0472">Membrane</keyword>
<keyword id="KW-0547">Nucleotide-binding</keyword>
<keyword id="KW-0597">Phosphoprotein</keyword>
<keyword id="KW-0675">Receptor</keyword>
<keyword id="KW-1185">Reference proteome</keyword>
<keyword id="KW-0677">Repeat</keyword>
<keyword id="KW-0723">Serine/threonine-protein kinase</keyword>
<keyword id="KW-0732">Signal</keyword>
<keyword id="KW-0808">Transferase</keyword>
<keyword id="KW-0812">Transmembrane</keyword>
<keyword id="KW-1133">Transmembrane helix</keyword>
<accession>Q9SD62</accession>
<proteinExistence type="inferred from homology"/>
<reference key="1">
    <citation type="journal article" date="2000" name="Nature">
        <title>Sequence and analysis of chromosome 3 of the plant Arabidopsis thaliana.</title>
        <authorList>
            <person name="Salanoubat M."/>
            <person name="Lemcke K."/>
            <person name="Rieger M."/>
            <person name="Ansorge W."/>
            <person name="Unseld M."/>
            <person name="Fartmann B."/>
            <person name="Valle G."/>
            <person name="Bloecker H."/>
            <person name="Perez-Alonso M."/>
            <person name="Obermaier B."/>
            <person name="Delseny M."/>
            <person name="Boutry M."/>
            <person name="Grivell L.A."/>
            <person name="Mache R."/>
            <person name="Puigdomenech P."/>
            <person name="De Simone V."/>
            <person name="Choisne N."/>
            <person name="Artiguenave F."/>
            <person name="Robert C."/>
            <person name="Brottier P."/>
            <person name="Wincker P."/>
            <person name="Cattolico L."/>
            <person name="Weissenbach J."/>
            <person name="Saurin W."/>
            <person name="Quetier F."/>
            <person name="Schaefer M."/>
            <person name="Mueller-Auer S."/>
            <person name="Gabel C."/>
            <person name="Fuchs M."/>
            <person name="Benes V."/>
            <person name="Wurmbach E."/>
            <person name="Drzonek H."/>
            <person name="Erfle H."/>
            <person name="Jordan N."/>
            <person name="Bangert S."/>
            <person name="Wiedelmann R."/>
            <person name="Kranz H."/>
            <person name="Voss H."/>
            <person name="Holland R."/>
            <person name="Brandt P."/>
            <person name="Nyakatura G."/>
            <person name="Vezzi A."/>
            <person name="D'Angelo M."/>
            <person name="Pallavicini A."/>
            <person name="Toppo S."/>
            <person name="Simionati B."/>
            <person name="Conrad A."/>
            <person name="Hornischer K."/>
            <person name="Kauer G."/>
            <person name="Loehnert T.-H."/>
            <person name="Nordsiek G."/>
            <person name="Reichelt J."/>
            <person name="Scharfe M."/>
            <person name="Schoen O."/>
            <person name="Bargues M."/>
            <person name="Terol J."/>
            <person name="Climent J."/>
            <person name="Navarro P."/>
            <person name="Collado C."/>
            <person name="Perez-Perez A."/>
            <person name="Ottenwaelder B."/>
            <person name="Duchemin D."/>
            <person name="Cooke R."/>
            <person name="Laudie M."/>
            <person name="Berger-Llauro C."/>
            <person name="Purnelle B."/>
            <person name="Masuy D."/>
            <person name="de Haan M."/>
            <person name="Maarse A.C."/>
            <person name="Alcaraz J.-P."/>
            <person name="Cottet A."/>
            <person name="Casacuberta E."/>
            <person name="Monfort A."/>
            <person name="Argiriou A."/>
            <person name="Flores M."/>
            <person name="Liguori R."/>
            <person name="Vitale D."/>
            <person name="Mannhaupt G."/>
            <person name="Haase D."/>
            <person name="Schoof H."/>
            <person name="Rudd S."/>
            <person name="Zaccaria P."/>
            <person name="Mewes H.-W."/>
            <person name="Mayer K.F.X."/>
            <person name="Kaul S."/>
            <person name="Town C.D."/>
            <person name="Koo H.L."/>
            <person name="Tallon L.J."/>
            <person name="Jenkins J."/>
            <person name="Rooney T."/>
            <person name="Rizzo M."/>
            <person name="Walts A."/>
            <person name="Utterback T."/>
            <person name="Fujii C.Y."/>
            <person name="Shea T.P."/>
            <person name="Creasy T.H."/>
            <person name="Haas B."/>
            <person name="Maiti R."/>
            <person name="Wu D."/>
            <person name="Peterson J."/>
            <person name="Van Aken S."/>
            <person name="Pai G."/>
            <person name="Militscher J."/>
            <person name="Sellers P."/>
            <person name="Gill J.E."/>
            <person name="Feldblyum T.V."/>
            <person name="Preuss D."/>
            <person name="Lin X."/>
            <person name="Nierman W.C."/>
            <person name="Salzberg S.L."/>
            <person name="White O."/>
            <person name="Venter J.C."/>
            <person name="Fraser C.M."/>
            <person name="Kaneko T."/>
            <person name="Nakamura Y."/>
            <person name="Sato S."/>
            <person name="Kato T."/>
            <person name="Asamizu E."/>
            <person name="Sasamoto S."/>
            <person name="Kimura T."/>
            <person name="Idesawa K."/>
            <person name="Kawashima K."/>
            <person name="Kishida Y."/>
            <person name="Kiyokawa C."/>
            <person name="Kohara M."/>
            <person name="Matsumoto M."/>
            <person name="Matsuno A."/>
            <person name="Muraki A."/>
            <person name="Nakayama S."/>
            <person name="Nakazaki N."/>
            <person name="Shinpo S."/>
            <person name="Takeuchi C."/>
            <person name="Wada T."/>
            <person name="Watanabe A."/>
            <person name="Yamada M."/>
            <person name="Yasuda M."/>
            <person name="Tabata S."/>
        </authorList>
    </citation>
    <scope>NUCLEOTIDE SEQUENCE [LARGE SCALE GENOMIC DNA]</scope>
    <source>
        <strain>cv. Columbia</strain>
    </source>
</reference>
<reference key="2">
    <citation type="journal article" date="2017" name="Plant J.">
        <title>Araport11: a complete reannotation of the Arabidopsis thaliana reference genome.</title>
        <authorList>
            <person name="Cheng C.Y."/>
            <person name="Krishnakumar V."/>
            <person name="Chan A.P."/>
            <person name="Thibaud-Nissen F."/>
            <person name="Schobel S."/>
            <person name="Town C.D."/>
        </authorList>
    </citation>
    <scope>GENOME REANNOTATION</scope>
    <source>
        <strain>cv. Columbia</strain>
    </source>
</reference>
<evidence type="ECO:0000250" key="1"/>
<evidence type="ECO:0000250" key="2">
    <source>
        <dbReference type="UniProtKB" id="C0LGT6"/>
    </source>
</evidence>
<evidence type="ECO:0000250" key="3">
    <source>
        <dbReference type="UniProtKB" id="O22476"/>
    </source>
</evidence>
<evidence type="ECO:0000255" key="4"/>
<evidence type="ECO:0000255" key="5">
    <source>
        <dbReference type="PROSITE-ProRule" id="PRU00159"/>
    </source>
</evidence>
<evidence type="ECO:0000255" key="6">
    <source>
        <dbReference type="PROSITE-ProRule" id="PRU10027"/>
    </source>
</evidence>
<organism>
    <name type="scientific">Arabidopsis thaliana</name>
    <name type="common">Mouse-ear cress</name>
    <dbReference type="NCBI Taxonomy" id="3702"/>
    <lineage>
        <taxon>Eukaryota</taxon>
        <taxon>Viridiplantae</taxon>
        <taxon>Streptophyta</taxon>
        <taxon>Embryophyta</taxon>
        <taxon>Tracheophyta</taxon>
        <taxon>Spermatophyta</taxon>
        <taxon>Magnoliopsida</taxon>
        <taxon>eudicotyledons</taxon>
        <taxon>Gunneridae</taxon>
        <taxon>Pentapetalae</taxon>
        <taxon>rosids</taxon>
        <taxon>malvids</taxon>
        <taxon>Brassicales</taxon>
        <taxon>Brassicaceae</taxon>
        <taxon>Camelineae</taxon>
        <taxon>Arabidopsis</taxon>
    </lineage>
</organism>
<name>Y3471_ARATH</name>
<dbReference type="EC" id="2.7.11.1"/>
<dbReference type="EMBL" id="AL133292">
    <property type="protein sequence ID" value="CAB61957.1"/>
    <property type="molecule type" value="Genomic_DNA"/>
</dbReference>
<dbReference type="EMBL" id="CP002686">
    <property type="protein sequence ID" value="AEE78244.1"/>
    <property type="molecule type" value="Genomic_DNA"/>
</dbReference>
<dbReference type="PIR" id="T45647">
    <property type="entry name" value="T45647"/>
</dbReference>
<dbReference type="RefSeq" id="NP_190295.1">
    <property type="nucleotide sequence ID" value="NM_114578.2"/>
</dbReference>
<dbReference type="SMR" id="Q9SD62"/>
<dbReference type="BioGRID" id="9184">
    <property type="interactions" value="10"/>
</dbReference>
<dbReference type="FunCoup" id="Q9SD62">
    <property type="interactions" value="249"/>
</dbReference>
<dbReference type="IntAct" id="Q9SD62">
    <property type="interactions" value="9"/>
</dbReference>
<dbReference type="STRING" id="3702.Q9SD62"/>
<dbReference type="GlyGen" id="Q9SD62">
    <property type="glycosylation" value="20 sites"/>
</dbReference>
<dbReference type="PaxDb" id="3702-AT3G47110.1"/>
<dbReference type="EnsemblPlants" id="AT3G47110.1">
    <property type="protein sequence ID" value="AT3G47110.1"/>
    <property type="gene ID" value="AT3G47110"/>
</dbReference>
<dbReference type="GeneID" id="823864"/>
<dbReference type="Gramene" id="AT3G47110.1">
    <property type="protein sequence ID" value="AT3G47110.1"/>
    <property type="gene ID" value="AT3G47110"/>
</dbReference>
<dbReference type="KEGG" id="ath:AT3G47110"/>
<dbReference type="Araport" id="AT3G47110"/>
<dbReference type="TAIR" id="AT3G47110"/>
<dbReference type="eggNOG" id="ENOG502QPYS">
    <property type="taxonomic scope" value="Eukaryota"/>
</dbReference>
<dbReference type="HOGENOM" id="CLU_000288_22_0_1"/>
<dbReference type="InParanoid" id="Q9SD62"/>
<dbReference type="OMA" id="VYLHTYC"/>
<dbReference type="PhylomeDB" id="Q9SD62"/>
<dbReference type="PRO" id="PR:Q9SD62"/>
<dbReference type="Proteomes" id="UP000006548">
    <property type="component" value="Chromosome 3"/>
</dbReference>
<dbReference type="ExpressionAtlas" id="Q9SD62">
    <property type="expression patterns" value="baseline and differential"/>
</dbReference>
<dbReference type="GO" id="GO:0005886">
    <property type="term" value="C:plasma membrane"/>
    <property type="evidence" value="ECO:0007669"/>
    <property type="project" value="UniProtKB-SubCell"/>
</dbReference>
<dbReference type="GO" id="GO:0005524">
    <property type="term" value="F:ATP binding"/>
    <property type="evidence" value="ECO:0007669"/>
    <property type="project" value="UniProtKB-KW"/>
</dbReference>
<dbReference type="GO" id="GO:0106310">
    <property type="term" value="F:protein serine kinase activity"/>
    <property type="evidence" value="ECO:0007669"/>
    <property type="project" value="RHEA"/>
</dbReference>
<dbReference type="GO" id="GO:0004674">
    <property type="term" value="F:protein serine/threonine kinase activity"/>
    <property type="evidence" value="ECO:0007669"/>
    <property type="project" value="UniProtKB-KW"/>
</dbReference>
<dbReference type="FunFam" id="3.80.10.10:FF:000275">
    <property type="entry name" value="Leucine-rich repeat receptor-like protein kinase"/>
    <property type="match status" value="1"/>
</dbReference>
<dbReference type="FunFam" id="3.30.200.20:FF:000432">
    <property type="entry name" value="LRR receptor-like serine/threonine-protein kinase EFR"/>
    <property type="match status" value="1"/>
</dbReference>
<dbReference type="FunFam" id="3.80.10.10:FF:000288">
    <property type="entry name" value="LRR receptor-like serine/threonine-protein kinase EFR"/>
    <property type="match status" value="1"/>
</dbReference>
<dbReference type="FunFam" id="3.80.10.10:FF:000041">
    <property type="entry name" value="LRR receptor-like serine/threonine-protein kinase ERECTA"/>
    <property type="match status" value="1"/>
</dbReference>
<dbReference type="FunFam" id="1.10.510.10:FF:000358">
    <property type="entry name" value="Putative leucine-rich repeat receptor-like serine/threonine-protein kinase"/>
    <property type="match status" value="1"/>
</dbReference>
<dbReference type="Gene3D" id="3.30.200.20">
    <property type="entry name" value="Phosphorylase Kinase, domain 1"/>
    <property type="match status" value="1"/>
</dbReference>
<dbReference type="Gene3D" id="3.80.10.10">
    <property type="entry name" value="Ribonuclease Inhibitor"/>
    <property type="match status" value="2"/>
</dbReference>
<dbReference type="Gene3D" id="1.10.510.10">
    <property type="entry name" value="Transferase(Phosphotransferase) domain 1"/>
    <property type="match status" value="1"/>
</dbReference>
<dbReference type="InterPro" id="IPR011009">
    <property type="entry name" value="Kinase-like_dom_sf"/>
</dbReference>
<dbReference type="InterPro" id="IPR001611">
    <property type="entry name" value="Leu-rich_rpt"/>
</dbReference>
<dbReference type="InterPro" id="IPR003591">
    <property type="entry name" value="Leu-rich_rpt_typical-subtyp"/>
</dbReference>
<dbReference type="InterPro" id="IPR032675">
    <property type="entry name" value="LRR_dom_sf"/>
</dbReference>
<dbReference type="InterPro" id="IPR013210">
    <property type="entry name" value="LRR_N_plant-typ"/>
</dbReference>
<dbReference type="InterPro" id="IPR055414">
    <property type="entry name" value="LRR_R13L4/SHOC2-like"/>
</dbReference>
<dbReference type="InterPro" id="IPR000719">
    <property type="entry name" value="Prot_kinase_dom"/>
</dbReference>
<dbReference type="InterPro" id="IPR017441">
    <property type="entry name" value="Protein_kinase_ATP_BS"/>
</dbReference>
<dbReference type="InterPro" id="IPR001245">
    <property type="entry name" value="Ser-Thr/Tyr_kinase_cat_dom"/>
</dbReference>
<dbReference type="InterPro" id="IPR008271">
    <property type="entry name" value="Ser/Thr_kinase_AS"/>
</dbReference>
<dbReference type="PANTHER" id="PTHR45974:SF279">
    <property type="entry name" value="LEUCINE-RICH REPEAT PROTEIN KINASE FAMILY PROTEIN"/>
    <property type="match status" value="1"/>
</dbReference>
<dbReference type="PANTHER" id="PTHR45974">
    <property type="entry name" value="RECEPTOR-LIKE PROTEIN 55"/>
    <property type="match status" value="1"/>
</dbReference>
<dbReference type="Pfam" id="PF00560">
    <property type="entry name" value="LRR_1"/>
    <property type="match status" value="6"/>
</dbReference>
<dbReference type="Pfam" id="PF23598">
    <property type="entry name" value="LRR_14"/>
    <property type="match status" value="1"/>
</dbReference>
<dbReference type="Pfam" id="PF08263">
    <property type="entry name" value="LRRNT_2"/>
    <property type="match status" value="1"/>
</dbReference>
<dbReference type="Pfam" id="PF07714">
    <property type="entry name" value="PK_Tyr_Ser-Thr"/>
    <property type="match status" value="1"/>
</dbReference>
<dbReference type="SMART" id="SM00369">
    <property type="entry name" value="LRR_TYP"/>
    <property type="match status" value="8"/>
</dbReference>
<dbReference type="SMART" id="SM00220">
    <property type="entry name" value="S_TKc"/>
    <property type="match status" value="1"/>
</dbReference>
<dbReference type="SUPFAM" id="SSF52058">
    <property type="entry name" value="L domain-like"/>
    <property type="match status" value="1"/>
</dbReference>
<dbReference type="SUPFAM" id="SSF56112">
    <property type="entry name" value="Protein kinase-like (PK-like)"/>
    <property type="match status" value="1"/>
</dbReference>
<dbReference type="SUPFAM" id="SSF52047">
    <property type="entry name" value="RNI-like"/>
    <property type="match status" value="1"/>
</dbReference>
<dbReference type="PROSITE" id="PS00107">
    <property type="entry name" value="PROTEIN_KINASE_ATP"/>
    <property type="match status" value="1"/>
</dbReference>
<dbReference type="PROSITE" id="PS50011">
    <property type="entry name" value="PROTEIN_KINASE_DOM"/>
    <property type="match status" value="1"/>
</dbReference>
<dbReference type="PROSITE" id="PS00108">
    <property type="entry name" value="PROTEIN_KINASE_ST"/>
    <property type="match status" value="1"/>
</dbReference>
<comment type="catalytic activity">
    <reaction>
        <text>L-seryl-[protein] + ATP = O-phospho-L-seryl-[protein] + ADP + H(+)</text>
        <dbReference type="Rhea" id="RHEA:17989"/>
        <dbReference type="Rhea" id="RHEA-COMP:9863"/>
        <dbReference type="Rhea" id="RHEA-COMP:11604"/>
        <dbReference type="ChEBI" id="CHEBI:15378"/>
        <dbReference type="ChEBI" id="CHEBI:29999"/>
        <dbReference type="ChEBI" id="CHEBI:30616"/>
        <dbReference type="ChEBI" id="CHEBI:83421"/>
        <dbReference type="ChEBI" id="CHEBI:456216"/>
        <dbReference type="EC" id="2.7.11.1"/>
    </reaction>
</comment>
<comment type="catalytic activity">
    <reaction>
        <text>L-threonyl-[protein] + ATP = O-phospho-L-threonyl-[protein] + ADP + H(+)</text>
        <dbReference type="Rhea" id="RHEA:46608"/>
        <dbReference type="Rhea" id="RHEA-COMP:11060"/>
        <dbReference type="Rhea" id="RHEA-COMP:11605"/>
        <dbReference type="ChEBI" id="CHEBI:15378"/>
        <dbReference type="ChEBI" id="CHEBI:30013"/>
        <dbReference type="ChEBI" id="CHEBI:30616"/>
        <dbReference type="ChEBI" id="CHEBI:61977"/>
        <dbReference type="ChEBI" id="CHEBI:456216"/>
        <dbReference type="EC" id="2.7.11.1"/>
    </reaction>
</comment>
<comment type="subcellular location">
    <subcellularLocation>
        <location evidence="1">Cell membrane</location>
        <topology evidence="1">Single-pass type I membrane protein</topology>
    </subcellularLocation>
</comment>
<comment type="similarity">
    <text evidence="5">Belongs to the protein kinase superfamily. Ser/Thr protein kinase family.</text>
</comment>